<protein>
    <recommendedName>
        <fullName>Dihydrofolate reductase</fullName>
        <shortName>DHFR</shortName>
        <ecNumber>1.5.1.3</ecNumber>
    </recommendedName>
</protein>
<comment type="function">
    <text evidence="1">Key enzyme in folate metabolism. Catalyzes an essential reaction for de novo glycine and purine synthesis, and for DNA precursor synthesis (By similarity).</text>
</comment>
<comment type="catalytic activity">
    <reaction evidence="2">
        <text>(6S)-5,6,7,8-tetrahydrofolate + NADP(+) = 7,8-dihydrofolate + NADPH + H(+)</text>
        <dbReference type="Rhea" id="RHEA:15009"/>
        <dbReference type="ChEBI" id="CHEBI:15378"/>
        <dbReference type="ChEBI" id="CHEBI:57451"/>
        <dbReference type="ChEBI" id="CHEBI:57453"/>
        <dbReference type="ChEBI" id="CHEBI:57783"/>
        <dbReference type="ChEBI" id="CHEBI:58349"/>
        <dbReference type="EC" id="1.5.1.3"/>
    </reaction>
</comment>
<comment type="pathway">
    <text>Cofactor biosynthesis; tetrahydrofolate biosynthesis; 5,6,7,8-tetrahydrofolate from 7,8-dihydrofolate: step 1/1.</text>
</comment>
<comment type="similarity">
    <text evidence="3">Belongs to the dihydrofolate reductase family.</text>
</comment>
<name>DYR_STAAM</name>
<feature type="initiator methionine" description="Removed" evidence="1">
    <location>
        <position position="1"/>
    </location>
</feature>
<feature type="chain" id="PRO_0000186407" description="Dihydrofolate reductase">
    <location>
        <begin position="2"/>
        <end position="159"/>
    </location>
</feature>
<feature type="domain" description="DHFR" evidence="2">
    <location>
        <begin position="2"/>
        <end position="157"/>
    </location>
</feature>
<feature type="binding site" evidence="1">
    <location>
        <begin position="6"/>
        <end position="8"/>
    </location>
    <ligand>
        <name>substrate</name>
    </ligand>
</feature>
<feature type="binding site" evidence="1">
    <location>
        <begin position="7"/>
        <end position="8"/>
    </location>
    <ligand>
        <name>NADP(+)</name>
        <dbReference type="ChEBI" id="CHEBI:58349"/>
    </ligand>
</feature>
<feature type="binding site" evidence="1">
    <location>
        <begin position="15"/>
        <end position="20"/>
    </location>
    <ligand>
        <name>NADP(+)</name>
        <dbReference type="ChEBI" id="CHEBI:58349"/>
    </ligand>
</feature>
<feature type="binding site" evidence="1">
    <location>
        <position position="28"/>
    </location>
    <ligand>
        <name>substrate</name>
    </ligand>
</feature>
<feature type="binding site" evidence="1">
    <location>
        <begin position="44"/>
        <end position="47"/>
    </location>
    <ligand>
        <name>NADP(+)</name>
        <dbReference type="ChEBI" id="CHEBI:58349"/>
    </ligand>
</feature>
<feature type="binding site" evidence="1">
    <location>
        <position position="58"/>
    </location>
    <ligand>
        <name>substrate</name>
    </ligand>
</feature>
<feature type="binding site" evidence="1">
    <location>
        <begin position="63"/>
        <end position="66"/>
    </location>
    <ligand>
        <name>NADP(+)</name>
        <dbReference type="ChEBI" id="CHEBI:58349"/>
    </ligand>
</feature>
<feature type="binding site" evidence="1">
    <location>
        <begin position="93"/>
        <end position="98"/>
    </location>
    <ligand>
        <name>NADP(+)</name>
        <dbReference type="ChEBI" id="CHEBI:58349"/>
    </ligand>
</feature>
<feature type="binding site" evidence="1">
    <location>
        <position position="112"/>
    </location>
    <ligand>
        <name>substrate</name>
    </ligand>
</feature>
<sequence>MTLSILVAHDLQRVIGFENQLPWHLPNDLKHVKKLSTGHTLVMGRKTFESIGKPLPNRRNVVLTSDTSFNVEGVDVIHSIEDIYQLPGHVFIFGGQTLFEEMIDKVDDMYITVIEGKFRGDTFFPPYTFEDWEVASSVEGKLDEKNTIPHTFLHLIRKK</sequence>
<accession>P0A016</accession>
<accession>P10167</accession>
<evidence type="ECO:0000250" key="1"/>
<evidence type="ECO:0000255" key="2">
    <source>
        <dbReference type="PROSITE-ProRule" id="PRU00660"/>
    </source>
</evidence>
<evidence type="ECO:0000305" key="3"/>
<proteinExistence type="inferred from homology"/>
<organism>
    <name type="scientific">Staphylococcus aureus (strain Mu50 / ATCC 700699)</name>
    <dbReference type="NCBI Taxonomy" id="158878"/>
    <lineage>
        <taxon>Bacteria</taxon>
        <taxon>Bacillati</taxon>
        <taxon>Bacillota</taxon>
        <taxon>Bacilli</taxon>
        <taxon>Bacillales</taxon>
        <taxon>Staphylococcaceae</taxon>
        <taxon>Staphylococcus</taxon>
    </lineage>
</organism>
<keyword id="KW-0521">NADP</keyword>
<keyword id="KW-0554">One-carbon metabolism</keyword>
<keyword id="KW-0560">Oxidoreductase</keyword>
<gene>
    <name type="primary">folA</name>
    <name type="ordered locus">SAV1426</name>
</gene>
<reference key="1">
    <citation type="journal article" date="2001" name="Lancet">
        <title>Whole genome sequencing of meticillin-resistant Staphylococcus aureus.</title>
        <authorList>
            <person name="Kuroda M."/>
            <person name="Ohta T."/>
            <person name="Uchiyama I."/>
            <person name="Baba T."/>
            <person name="Yuzawa H."/>
            <person name="Kobayashi I."/>
            <person name="Cui L."/>
            <person name="Oguchi A."/>
            <person name="Aoki K."/>
            <person name="Nagai Y."/>
            <person name="Lian J.-Q."/>
            <person name="Ito T."/>
            <person name="Kanamori M."/>
            <person name="Matsumaru H."/>
            <person name="Maruyama A."/>
            <person name="Murakami H."/>
            <person name="Hosoyama A."/>
            <person name="Mizutani-Ui Y."/>
            <person name="Takahashi N.K."/>
            <person name="Sawano T."/>
            <person name="Inoue R."/>
            <person name="Kaito C."/>
            <person name="Sekimizu K."/>
            <person name="Hirakawa H."/>
            <person name="Kuhara S."/>
            <person name="Goto S."/>
            <person name="Yabuzaki J."/>
            <person name="Kanehisa M."/>
            <person name="Yamashita A."/>
            <person name="Oshima K."/>
            <person name="Furuya K."/>
            <person name="Yoshino C."/>
            <person name="Shiba T."/>
            <person name="Hattori M."/>
            <person name="Ogasawara N."/>
            <person name="Hayashi H."/>
            <person name="Hiramatsu K."/>
        </authorList>
    </citation>
    <scope>NUCLEOTIDE SEQUENCE [LARGE SCALE GENOMIC DNA]</scope>
    <source>
        <strain>Mu50 / ATCC 700699</strain>
    </source>
</reference>
<dbReference type="EC" id="1.5.1.3"/>
<dbReference type="EMBL" id="BA000017">
    <property type="protein sequence ID" value="BAB57588.1"/>
    <property type="molecule type" value="Genomic_DNA"/>
</dbReference>
<dbReference type="RefSeq" id="WP_000175746.1">
    <property type="nucleotide sequence ID" value="NC_002758.2"/>
</dbReference>
<dbReference type="BMRB" id="P0A016"/>
<dbReference type="SMR" id="P0A016"/>
<dbReference type="KEGG" id="sav:SAV1426"/>
<dbReference type="HOGENOM" id="CLU_043966_5_1_9"/>
<dbReference type="PhylomeDB" id="P0A016"/>
<dbReference type="BRENDA" id="1.5.1.3">
    <property type="organism ID" value="3352"/>
</dbReference>
<dbReference type="UniPathway" id="UPA00077">
    <property type="reaction ID" value="UER00158"/>
</dbReference>
<dbReference type="Proteomes" id="UP000002481">
    <property type="component" value="Chromosome"/>
</dbReference>
<dbReference type="GO" id="GO:0005829">
    <property type="term" value="C:cytosol"/>
    <property type="evidence" value="ECO:0007669"/>
    <property type="project" value="TreeGrafter"/>
</dbReference>
<dbReference type="GO" id="GO:0004146">
    <property type="term" value="F:dihydrofolate reductase activity"/>
    <property type="evidence" value="ECO:0007669"/>
    <property type="project" value="UniProtKB-EC"/>
</dbReference>
<dbReference type="GO" id="GO:0050661">
    <property type="term" value="F:NADP binding"/>
    <property type="evidence" value="ECO:0007669"/>
    <property type="project" value="InterPro"/>
</dbReference>
<dbReference type="GO" id="GO:0046452">
    <property type="term" value="P:dihydrofolate metabolic process"/>
    <property type="evidence" value="ECO:0007669"/>
    <property type="project" value="TreeGrafter"/>
</dbReference>
<dbReference type="GO" id="GO:0046655">
    <property type="term" value="P:folic acid metabolic process"/>
    <property type="evidence" value="ECO:0007669"/>
    <property type="project" value="TreeGrafter"/>
</dbReference>
<dbReference type="GO" id="GO:0006730">
    <property type="term" value="P:one-carbon metabolic process"/>
    <property type="evidence" value="ECO:0007669"/>
    <property type="project" value="UniProtKB-KW"/>
</dbReference>
<dbReference type="GO" id="GO:0046654">
    <property type="term" value="P:tetrahydrofolate biosynthetic process"/>
    <property type="evidence" value="ECO:0007669"/>
    <property type="project" value="UniProtKB-UniPathway"/>
</dbReference>
<dbReference type="CDD" id="cd00209">
    <property type="entry name" value="DHFR"/>
    <property type="match status" value="1"/>
</dbReference>
<dbReference type="FunFam" id="3.40.430.10:FF:000001">
    <property type="entry name" value="Dihydrofolate reductase"/>
    <property type="match status" value="1"/>
</dbReference>
<dbReference type="Gene3D" id="3.40.430.10">
    <property type="entry name" value="Dihydrofolate Reductase, subunit A"/>
    <property type="match status" value="1"/>
</dbReference>
<dbReference type="InterPro" id="IPR012259">
    <property type="entry name" value="DHFR"/>
</dbReference>
<dbReference type="InterPro" id="IPR024072">
    <property type="entry name" value="DHFR-like_dom_sf"/>
</dbReference>
<dbReference type="InterPro" id="IPR017925">
    <property type="entry name" value="DHFR_CS"/>
</dbReference>
<dbReference type="InterPro" id="IPR001796">
    <property type="entry name" value="DHFR_dom"/>
</dbReference>
<dbReference type="PANTHER" id="PTHR48069">
    <property type="entry name" value="DIHYDROFOLATE REDUCTASE"/>
    <property type="match status" value="1"/>
</dbReference>
<dbReference type="PANTHER" id="PTHR48069:SF3">
    <property type="entry name" value="DIHYDROFOLATE REDUCTASE"/>
    <property type="match status" value="1"/>
</dbReference>
<dbReference type="Pfam" id="PF00186">
    <property type="entry name" value="DHFR_1"/>
    <property type="match status" value="1"/>
</dbReference>
<dbReference type="PIRSF" id="PIRSF000194">
    <property type="entry name" value="DHFR"/>
    <property type="match status" value="1"/>
</dbReference>
<dbReference type="PRINTS" id="PR00070">
    <property type="entry name" value="DHFR"/>
</dbReference>
<dbReference type="SUPFAM" id="SSF53597">
    <property type="entry name" value="Dihydrofolate reductase-like"/>
    <property type="match status" value="1"/>
</dbReference>
<dbReference type="PROSITE" id="PS00075">
    <property type="entry name" value="DHFR_1"/>
    <property type="match status" value="1"/>
</dbReference>
<dbReference type="PROSITE" id="PS51330">
    <property type="entry name" value="DHFR_2"/>
    <property type="match status" value="1"/>
</dbReference>